<keyword id="KW-0963">Cytoplasm</keyword>
<keyword id="KW-0269">Exonuclease</keyword>
<keyword id="KW-0378">Hydrolase</keyword>
<keyword id="KW-0540">Nuclease</keyword>
<evidence type="ECO:0000255" key="1">
    <source>
        <dbReference type="HAMAP-Rule" id="MF_00337"/>
    </source>
</evidence>
<protein>
    <recommendedName>
        <fullName evidence="1">Exodeoxyribonuclease 7 small subunit</fullName>
        <ecNumber evidence="1">3.1.11.6</ecNumber>
    </recommendedName>
    <alternativeName>
        <fullName evidence="1">Exodeoxyribonuclease VII small subunit</fullName>
        <shortName evidence="1">Exonuclease VII small subunit</shortName>
    </alternativeName>
</protein>
<dbReference type="EC" id="3.1.11.6" evidence="1"/>
<dbReference type="EMBL" id="CP000721">
    <property type="protein sequence ID" value="ABR33876.1"/>
    <property type="molecule type" value="Genomic_DNA"/>
</dbReference>
<dbReference type="RefSeq" id="WP_011969028.1">
    <property type="nucleotide sequence ID" value="NC_009617.1"/>
</dbReference>
<dbReference type="SMR" id="A6LU46"/>
<dbReference type="KEGG" id="cbe:Cbei_1704"/>
<dbReference type="eggNOG" id="COG1722">
    <property type="taxonomic scope" value="Bacteria"/>
</dbReference>
<dbReference type="HOGENOM" id="CLU_145918_3_2_9"/>
<dbReference type="Proteomes" id="UP000000565">
    <property type="component" value="Chromosome"/>
</dbReference>
<dbReference type="GO" id="GO:0005829">
    <property type="term" value="C:cytosol"/>
    <property type="evidence" value="ECO:0007669"/>
    <property type="project" value="TreeGrafter"/>
</dbReference>
<dbReference type="GO" id="GO:0009318">
    <property type="term" value="C:exodeoxyribonuclease VII complex"/>
    <property type="evidence" value="ECO:0007669"/>
    <property type="project" value="InterPro"/>
</dbReference>
<dbReference type="GO" id="GO:0008855">
    <property type="term" value="F:exodeoxyribonuclease VII activity"/>
    <property type="evidence" value="ECO:0007669"/>
    <property type="project" value="UniProtKB-UniRule"/>
</dbReference>
<dbReference type="GO" id="GO:0006308">
    <property type="term" value="P:DNA catabolic process"/>
    <property type="evidence" value="ECO:0007669"/>
    <property type="project" value="UniProtKB-UniRule"/>
</dbReference>
<dbReference type="Gene3D" id="1.10.287.1040">
    <property type="entry name" value="Exonuclease VII, small subunit"/>
    <property type="match status" value="1"/>
</dbReference>
<dbReference type="HAMAP" id="MF_00337">
    <property type="entry name" value="Exonuc_7_S"/>
    <property type="match status" value="1"/>
</dbReference>
<dbReference type="InterPro" id="IPR003761">
    <property type="entry name" value="Exonuc_VII_S"/>
</dbReference>
<dbReference type="InterPro" id="IPR037004">
    <property type="entry name" value="Exonuc_VII_ssu_sf"/>
</dbReference>
<dbReference type="NCBIfam" id="NF002140">
    <property type="entry name" value="PRK00977.1-4"/>
    <property type="match status" value="1"/>
</dbReference>
<dbReference type="NCBIfam" id="TIGR01280">
    <property type="entry name" value="xseB"/>
    <property type="match status" value="1"/>
</dbReference>
<dbReference type="PANTHER" id="PTHR34137">
    <property type="entry name" value="EXODEOXYRIBONUCLEASE 7 SMALL SUBUNIT"/>
    <property type="match status" value="1"/>
</dbReference>
<dbReference type="PANTHER" id="PTHR34137:SF1">
    <property type="entry name" value="EXODEOXYRIBONUCLEASE 7 SMALL SUBUNIT"/>
    <property type="match status" value="1"/>
</dbReference>
<dbReference type="Pfam" id="PF02609">
    <property type="entry name" value="Exonuc_VII_S"/>
    <property type="match status" value="1"/>
</dbReference>
<dbReference type="PIRSF" id="PIRSF006488">
    <property type="entry name" value="Exonuc_VII_S"/>
    <property type="match status" value="1"/>
</dbReference>
<dbReference type="SUPFAM" id="SSF116842">
    <property type="entry name" value="XseB-like"/>
    <property type="match status" value="1"/>
</dbReference>
<reference key="1">
    <citation type="submission" date="2007-06" db="EMBL/GenBank/DDBJ databases">
        <title>Complete sequence of Clostridium beijerinckii NCIMB 8052.</title>
        <authorList>
            <consortium name="US DOE Joint Genome Institute"/>
            <person name="Copeland A."/>
            <person name="Lucas S."/>
            <person name="Lapidus A."/>
            <person name="Barry K."/>
            <person name="Detter J.C."/>
            <person name="Glavina del Rio T."/>
            <person name="Hammon N."/>
            <person name="Israni S."/>
            <person name="Dalin E."/>
            <person name="Tice H."/>
            <person name="Pitluck S."/>
            <person name="Sims D."/>
            <person name="Brettin T."/>
            <person name="Bruce D."/>
            <person name="Tapia R."/>
            <person name="Brainard J."/>
            <person name="Schmutz J."/>
            <person name="Larimer F."/>
            <person name="Land M."/>
            <person name="Hauser L."/>
            <person name="Kyrpides N."/>
            <person name="Mikhailova N."/>
            <person name="Bennet G."/>
            <person name="Cann I."/>
            <person name="Chen J.-S."/>
            <person name="Contreras A.L."/>
            <person name="Jones D."/>
            <person name="Kashket E."/>
            <person name="Mitchell W."/>
            <person name="Stoddard S."/>
            <person name="Schwarz W."/>
            <person name="Qureshi N."/>
            <person name="Young M."/>
            <person name="Shi Z."/>
            <person name="Ezeji T."/>
            <person name="White B."/>
            <person name="Blaschek H."/>
            <person name="Richardson P."/>
        </authorList>
    </citation>
    <scope>NUCLEOTIDE SEQUENCE [LARGE SCALE GENOMIC DNA]</scope>
    <source>
        <strain>ATCC 51743 / NCIMB 8052</strain>
    </source>
</reference>
<organism>
    <name type="scientific">Clostridium beijerinckii (strain ATCC 51743 / NCIMB 8052)</name>
    <name type="common">Clostridium acetobutylicum</name>
    <dbReference type="NCBI Taxonomy" id="290402"/>
    <lineage>
        <taxon>Bacteria</taxon>
        <taxon>Bacillati</taxon>
        <taxon>Bacillota</taxon>
        <taxon>Clostridia</taxon>
        <taxon>Eubacteriales</taxon>
        <taxon>Clostridiaceae</taxon>
        <taxon>Clostridium</taxon>
    </lineage>
</organism>
<sequence length="74" mass="8689">MAKKESYEEMLTKLQDILSNLETDDLNLEESMKSYEEGVKLVNKIYKILDSYEAKISIIKDDKELEFSEDYGDK</sequence>
<proteinExistence type="inferred from homology"/>
<feature type="chain" id="PRO_1000119912" description="Exodeoxyribonuclease 7 small subunit">
    <location>
        <begin position="1"/>
        <end position="74"/>
    </location>
</feature>
<accession>A6LU46</accession>
<name>EX7S_CLOB8</name>
<comment type="function">
    <text evidence="1">Bidirectionally degrades single-stranded DNA into large acid-insoluble oligonucleotides, which are then degraded further into small acid-soluble oligonucleotides.</text>
</comment>
<comment type="catalytic activity">
    <reaction evidence="1">
        <text>Exonucleolytic cleavage in either 5'- to 3'- or 3'- to 5'-direction to yield nucleoside 5'-phosphates.</text>
        <dbReference type="EC" id="3.1.11.6"/>
    </reaction>
</comment>
<comment type="subunit">
    <text evidence="1">Heterooligomer composed of large and small subunits.</text>
</comment>
<comment type="subcellular location">
    <subcellularLocation>
        <location evidence="1">Cytoplasm</location>
    </subcellularLocation>
</comment>
<comment type="similarity">
    <text evidence="1">Belongs to the XseB family.</text>
</comment>
<gene>
    <name evidence="1" type="primary">xseB</name>
    <name type="ordered locus">Cbei_1704</name>
</gene>